<comment type="function">
    <text evidence="1">NDH-1 shuttles electrons from NADH, via FMN and iron-sulfur (Fe-S) centers, to quinones in the respiratory chain. The immediate electron acceptor for the enzyme in this species is believed to be ubiquinone. Couples the redox reaction to proton translocation (for every two electrons transferred, four hydrogen ions are translocated across the cytoplasmic membrane), and thus conserves the redox energy in a proton gradient.</text>
</comment>
<comment type="catalytic activity">
    <reaction evidence="1">
        <text>a quinone + NADH + 5 H(+)(in) = a quinol + NAD(+) + 4 H(+)(out)</text>
        <dbReference type="Rhea" id="RHEA:57888"/>
        <dbReference type="ChEBI" id="CHEBI:15378"/>
        <dbReference type="ChEBI" id="CHEBI:24646"/>
        <dbReference type="ChEBI" id="CHEBI:57540"/>
        <dbReference type="ChEBI" id="CHEBI:57945"/>
        <dbReference type="ChEBI" id="CHEBI:132124"/>
    </reaction>
</comment>
<comment type="subunit">
    <text evidence="1">NDH-1 is composed of 14 different subunits. Subunits NuoA, H, J, K, L, M, N constitute the membrane sector of the complex.</text>
</comment>
<comment type="subcellular location">
    <subcellularLocation>
        <location evidence="1">Cell inner membrane</location>
        <topology evidence="1">Multi-pass membrane protein</topology>
    </subcellularLocation>
</comment>
<comment type="similarity">
    <text evidence="1">Belongs to the complex I subunit 2 family.</text>
</comment>
<sequence>MSSLLPPLGAVLPELLLALSAVVLVLIGAIQGEKSANLVNGLAIAALVAAGVLVMLQPAVTIAGFNGSMLVDPFARFMKVVALLGAAVSLIMSVDWLNRAQQAKFEYAVLVVLASLGICILISAGDLIALYLGLELMSLSLYVVAAINRDSVRSTEAGLKYFVLGALSSGMLLYGASLIYGFTGTVNFAGIAKVATAPTTGLVFGIVFLFAGLCFKVSAVPFHMWTPDVYEGAPTPVTAFFATAPKVAAMAVFVRVAVEALPHVTHSWQQIVTFVSIASMALGAFAAIGQRNIKRLLAYSSIGHMGFALVGLAAGTEQGVTGVLLYMAIYVVMTLGSFTCVLAMRRDGRSVETIEDLAGLARTKPLMALALAALMFSLAGIPPLAGFVAKYYVFLAAIQAGLYGLAVIGVVASVVGAYYYLRVVKIMYFDEPAEAFDGMPGELKAVLAVSGLFTTFFFLAPTPLIAAAGAAARALF</sequence>
<keyword id="KW-0997">Cell inner membrane</keyword>
<keyword id="KW-1003">Cell membrane</keyword>
<keyword id="KW-0472">Membrane</keyword>
<keyword id="KW-0520">NAD</keyword>
<keyword id="KW-0874">Quinone</keyword>
<keyword id="KW-1185">Reference proteome</keyword>
<keyword id="KW-1278">Translocase</keyword>
<keyword id="KW-0812">Transmembrane</keyword>
<keyword id="KW-1133">Transmembrane helix</keyword>
<keyword id="KW-0813">Transport</keyword>
<keyword id="KW-0830">Ubiquinone</keyword>
<accession>A8I421</accession>
<name>NUON_AZOC5</name>
<dbReference type="EC" id="7.1.1.-" evidence="1"/>
<dbReference type="EMBL" id="AP009384">
    <property type="protein sequence ID" value="BAF87679.1"/>
    <property type="molecule type" value="Genomic_DNA"/>
</dbReference>
<dbReference type="RefSeq" id="WP_012170209.1">
    <property type="nucleotide sequence ID" value="NC_009937.1"/>
</dbReference>
<dbReference type="SMR" id="A8I421"/>
<dbReference type="STRING" id="438753.AZC_1681"/>
<dbReference type="KEGG" id="azc:AZC_1681"/>
<dbReference type="eggNOG" id="COG1007">
    <property type="taxonomic scope" value="Bacteria"/>
</dbReference>
<dbReference type="HOGENOM" id="CLU_007100_1_3_5"/>
<dbReference type="Proteomes" id="UP000000270">
    <property type="component" value="Chromosome"/>
</dbReference>
<dbReference type="GO" id="GO:0005886">
    <property type="term" value="C:plasma membrane"/>
    <property type="evidence" value="ECO:0007669"/>
    <property type="project" value="UniProtKB-SubCell"/>
</dbReference>
<dbReference type="GO" id="GO:0008137">
    <property type="term" value="F:NADH dehydrogenase (ubiquinone) activity"/>
    <property type="evidence" value="ECO:0007669"/>
    <property type="project" value="InterPro"/>
</dbReference>
<dbReference type="GO" id="GO:0050136">
    <property type="term" value="F:NADH:ubiquinone reductase (non-electrogenic) activity"/>
    <property type="evidence" value="ECO:0007669"/>
    <property type="project" value="UniProtKB-UniRule"/>
</dbReference>
<dbReference type="GO" id="GO:0048038">
    <property type="term" value="F:quinone binding"/>
    <property type="evidence" value="ECO:0007669"/>
    <property type="project" value="UniProtKB-KW"/>
</dbReference>
<dbReference type="GO" id="GO:0042773">
    <property type="term" value="P:ATP synthesis coupled electron transport"/>
    <property type="evidence" value="ECO:0007669"/>
    <property type="project" value="InterPro"/>
</dbReference>
<dbReference type="HAMAP" id="MF_00445">
    <property type="entry name" value="NDH1_NuoN_1"/>
    <property type="match status" value="1"/>
</dbReference>
<dbReference type="InterPro" id="IPR010096">
    <property type="entry name" value="NADH-Q_OxRdtase_suN/2"/>
</dbReference>
<dbReference type="InterPro" id="IPR001750">
    <property type="entry name" value="ND/Mrp_TM"/>
</dbReference>
<dbReference type="NCBIfam" id="TIGR01770">
    <property type="entry name" value="NDH_I_N"/>
    <property type="match status" value="1"/>
</dbReference>
<dbReference type="NCBIfam" id="NF004440">
    <property type="entry name" value="PRK05777.1-3"/>
    <property type="match status" value="1"/>
</dbReference>
<dbReference type="PANTHER" id="PTHR22773">
    <property type="entry name" value="NADH DEHYDROGENASE"/>
    <property type="match status" value="1"/>
</dbReference>
<dbReference type="Pfam" id="PF00361">
    <property type="entry name" value="Proton_antipo_M"/>
    <property type="match status" value="1"/>
</dbReference>
<dbReference type="PRINTS" id="PR01434">
    <property type="entry name" value="NADHDHGNASE5"/>
</dbReference>
<gene>
    <name evidence="1" type="primary">nuoN</name>
    <name type="ordered locus">AZC_1681</name>
</gene>
<proteinExistence type="inferred from homology"/>
<organism>
    <name type="scientific">Azorhizobium caulinodans (strain ATCC 43989 / DSM 5975 / JCM 20966 / LMG 6465 / NBRC 14845 / NCIMB 13405 / ORS 571)</name>
    <dbReference type="NCBI Taxonomy" id="438753"/>
    <lineage>
        <taxon>Bacteria</taxon>
        <taxon>Pseudomonadati</taxon>
        <taxon>Pseudomonadota</taxon>
        <taxon>Alphaproteobacteria</taxon>
        <taxon>Hyphomicrobiales</taxon>
        <taxon>Xanthobacteraceae</taxon>
        <taxon>Azorhizobium</taxon>
    </lineage>
</organism>
<feature type="chain" id="PRO_0000391103" description="NADH-quinone oxidoreductase subunit N">
    <location>
        <begin position="1"/>
        <end position="476"/>
    </location>
</feature>
<feature type="transmembrane region" description="Helical" evidence="1">
    <location>
        <begin position="10"/>
        <end position="30"/>
    </location>
</feature>
<feature type="transmembrane region" description="Helical" evidence="1">
    <location>
        <begin position="42"/>
        <end position="62"/>
    </location>
</feature>
<feature type="transmembrane region" description="Helical" evidence="1">
    <location>
        <begin position="77"/>
        <end position="97"/>
    </location>
</feature>
<feature type="transmembrane region" description="Helical" evidence="1">
    <location>
        <begin position="108"/>
        <end position="128"/>
    </location>
</feature>
<feature type="transmembrane region" description="Helical" evidence="1">
    <location>
        <begin position="129"/>
        <end position="149"/>
    </location>
</feature>
<feature type="transmembrane region" description="Helical" evidence="1">
    <location>
        <begin position="162"/>
        <end position="182"/>
    </location>
</feature>
<feature type="transmembrane region" description="Helical" evidence="1">
    <location>
        <begin position="202"/>
        <end position="222"/>
    </location>
</feature>
<feature type="transmembrane region" description="Helical" evidence="1">
    <location>
        <begin position="234"/>
        <end position="254"/>
    </location>
</feature>
<feature type="transmembrane region" description="Helical" evidence="1">
    <location>
        <begin position="268"/>
        <end position="288"/>
    </location>
</feature>
<feature type="transmembrane region" description="Helical" evidence="1">
    <location>
        <begin position="296"/>
        <end position="316"/>
    </location>
</feature>
<feature type="transmembrane region" description="Helical" evidence="1">
    <location>
        <begin position="323"/>
        <end position="343"/>
    </location>
</feature>
<feature type="transmembrane region" description="Helical" evidence="1">
    <location>
        <begin position="368"/>
        <end position="388"/>
    </location>
</feature>
<feature type="transmembrane region" description="Helical" evidence="1">
    <location>
        <begin position="392"/>
        <end position="412"/>
    </location>
</feature>
<feature type="transmembrane region" description="Helical" evidence="1">
    <location>
        <begin position="445"/>
        <end position="465"/>
    </location>
</feature>
<protein>
    <recommendedName>
        <fullName evidence="1">NADH-quinone oxidoreductase subunit N</fullName>
        <ecNumber evidence="1">7.1.1.-</ecNumber>
    </recommendedName>
    <alternativeName>
        <fullName evidence="1">NADH dehydrogenase I subunit N</fullName>
    </alternativeName>
    <alternativeName>
        <fullName evidence="1">NDH-1 subunit N</fullName>
    </alternativeName>
</protein>
<evidence type="ECO:0000255" key="1">
    <source>
        <dbReference type="HAMAP-Rule" id="MF_00445"/>
    </source>
</evidence>
<reference key="1">
    <citation type="submission" date="2007-04" db="EMBL/GenBank/DDBJ databases">
        <title>Complete genome sequence of the nitrogen-fixing bacterium Azorhizobium caulinodans ORS571.</title>
        <authorList>
            <person name="Lee K.B."/>
            <person name="Backer P.D."/>
            <person name="Aono T."/>
            <person name="Liu C.T."/>
            <person name="Suzuki S."/>
            <person name="Suzuki T."/>
            <person name="Kaneko T."/>
            <person name="Yamada M."/>
            <person name="Tabata S."/>
            <person name="Kupfer D.M."/>
            <person name="Najar F.Z."/>
            <person name="Wiley G.B."/>
            <person name="Roe B."/>
            <person name="Binnewies T."/>
            <person name="Ussery D."/>
            <person name="Vereecke D."/>
            <person name="Gevers D."/>
            <person name="Holsters M."/>
            <person name="Oyaizu H."/>
        </authorList>
    </citation>
    <scope>NUCLEOTIDE SEQUENCE [LARGE SCALE GENOMIC DNA]</scope>
    <source>
        <strain>ATCC 43989 / DSM 5975 / JCM 20966 / LMG 6465 / NBRC 14845 / NCIMB 13405 / ORS 571</strain>
    </source>
</reference>